<evidence type="ECO:0000250" key="1">
    <source>
        <dbReference type="UniProtKB" id="Q78TU8"/>
    </source>
</evidence>
<evidence type="ECO:0000255" key="2"/>
<evidence type="ECO:0000256" key="3">
    <source>
        <dbReference type="SAM" id="MobiDB-lite"/>
    </source>
</evidence>
<evidence type="ECO:0000269" key="4">
    <source>
    </source>
</evidence>
<evidence type="ECO:0000269" key="5">
    <source>
    </source>
</evidence>
<evidence type="ECO:0000269" key="6">
    <source>
    </source>
</evidence>
<evidence type="ECO:0000269" key="7">
    <source>
    </source>
</evidence>
<evidence type="ECO:0000269" key="8">
    <source>
    </source>
</evidence>
<evidence type="ECO:0000303" key="9">
    <source>
    </source>
</evidence>
<evidence type="ECO:0000303" key="10">
    <source>
    </source>
</evidence>
<evidence type="ECO:0000303" key="11">
    <source>
    </source>
</evidence>
<evidence type="ECO:0000305" key="12"/>
<evidence type="ECO:0000312" key="13">
    <source>
        <dbReference type="HGNC" id="HGNC:30827"/>
    </source>
</evidence>
<organism>
    <name type="scientific">Homo sapiens</name>
    <name type="common">Human</name>
    <dbReference type="NCBI Taxonomy" id="9606"/>
    <lineage>
        <taxon>Eukaryota</taxon>
        <taxon>Metazoa</taxon>
        <taxon>Chordata</taxon>
        <taxon>Craniata</taxon>
        <taxon>Vertebrata</taxon>
        <taxon>Euteleostomi</taxon>
        <taxon>Mammalia</taxon>
        <taxon>Eutheria</taxon>
        <taxon>Euarchontoglires</taxon>
        <taxon>Primates</taxon>
        <taxon>Haplorrhini</taxon>
        <taxon>Catarrhini</taxon>
        <taxon>Hominidae</taxon>
        <taxon>Homo</taxon>
    </lineage>
</organism>
<name>F107A_HUMAN</name>
<feature type="chain" id="PRO_0000080014" description="Actin-associated protein FAM107A">
    <location>
        <begin position="1"/>
        <end position="144"/>
    </location>
</feature>
<feature type="region of interest" description="Disordered" evidence="3">
    <location>
        <begin position="105"/>
        <end position="124"/>
    </location>
</feature>
<feature type="coiled-coil region" evidence="2">
    <location>
        <begin position="66"/>
        <end position="112"/>
    </location>
</feature>
<feature type="short sequence motif" description="Nuclear localization signal" evidence="8">
    <location>
        <begin position="74"/>
        <end position="84"/>
    </location>
</feature>
<feature type="compositionally biased region" description="Basic and acidic residues" evidence="3">
    <location>
        <begin position="112"/>
        <end position="124"/>
    </location>
</feature>
<feature type="splice variant" id="VSP_054803" description="In isoform 3." evidence="11">
    <original>M</original>
    <variation>MAQRLGEWARGPSDATGLYRAVLLRSAAM</variation>
    <location>
        <position position="1"/>
    </location>
</feature>
<feature type="splice variant" id="VSP_054804" description="In isoform 4." evidence="11">
    <original>M</original>
    <variation>MGAAQGKKKTYSPQARFHSENEKQRRNGSAAM</variation>
    <location>
        <position position="1"/>
    </location>
</feature>
<feature type="splice variant" id="VSP_009232" description="In isoform 2." evidence="11">
    <original>LEKPPEKEEDHAPEFIKVRENLRRIATLTSEEREL</original>
    <variation>VGDGHPAGTTHPPGLSSREELCCGHS</variation>
    <location>
        <begin position="110"/>
        <end position="144"/>
    </location>
</feature>
<feature type="sequence variant" id="VAR_017238" description="In ovarian cancer and renal cell carcinoma cell lines." evidence="4">
    <original>L</original>
    <variation>M</variation>
    <location>
        <position position="15"/>
    </location>
</feature>
<feature type="sequence variant" id="VAR_017239" description="In renal cell carcinoma cell line." evidence="4">
    <original>P</original>
    <variation>L</variation>
    <location>
        <position position="19"/>
    </location>
</feature>
<feature type="sequence variant" id="VAR_049016" description="In dbSNP:rs1043942.">
    <original>A</original>
    <variation>S</variation>
    <location>
        <position position="89"/>
    </location>
</feature>
<feature type="sequence variant" id="VAR_049017" description="In dbSNP:rs11539086.">
    <original>E</original>
    <variation>Q</variation>
    <location>
        <position position="141"/>
    </location>
</feature>
<feature type="mutagenesis site" description="Increases nuclear and diffused cytoplasm localization, decreases interaction with MAP1A, alters actin cytoskeleton organization and decreases focal adhesion (FA) disassembly and cell migration." evidence="6">
    <location>
        <begin position="48"/>
        <end position="50"/>
    </location>
</feature>
<feature type="mutagenesis site" description="Increases diffused cytoplasm localization, loss of interaction with ACTB and colocalization with nuclear F-actin, decreases COMMD1 protein stability and ubiquitination of NF-kappa-B subunit RELA and decreases focal adhesion (FA) disassembly and cell migration; when associated with 122-A-A-123." evidence="8">
    <original>PE</original>
    <variation>AA</variation>
    <location>
        <begin position="65"/>
        <end position="66"/>
    </location>
</feature>
<feature type="mutagenesis site" description="Decreases nuclear localization and ubiquitination of NF-kappa-B subunit RELA." evidence="8">
    <original>RRR</original>
    <variation>AAA</variation>
    <location>
        <begin position="74"/>
        <end position="76"/>
    </location>
</feature>
<feature type="mutagenesis site" description="Decreases nuclear localization." evidence="8">
    <original>KKKK</original>
    <variation>AAAA</variation>
    <location>
        <begin position="81"/>
        <end position="84"/>
    </location>
</feature>
<feature type="mutagenesis site" description="Increases diffused cytoplasm localization, loss of interaction with ACTB and colocalization with nuclear F-actin, decreases COMMD1 protein stability and ubiquitination of NF-kappa-B subunit RELA and decreases focal adhesion (FA) disassembly and cell migration; when associated with 65-A-A-66." evidence="8">
    <original>PE</original>
    <variation>AA</variation>
    <location>
        <begin position="122"/>
        <end position="123"/>
    </location>
</feature>
<feature type="sequence conflict" description="In Ref. 4; BAG51416." evidence="12" ref="4">
    <original>R</original>
    <variation>Q</variation>
    <location sequence="O95990-4">
        <position position="26"/>
    </location>
</feature>
<dbReference type="EMBL" id="AF089854">
    <property type="protein sequence ID" value="AAD16094.1"/>
    <property type="molecule type" value="mRNA"/>
</dbReference>
<dbReference type="EMBL" id="AF089853">
    <property type="protein sequence ID" value="AAD16093.1"/>
    <property type="molecule type" value="mRNA"/>
</dbReference>
<dbReference type="EMBL" id="AB023810">
    <property type="protein sequence ID" value="BAA83072.1"/>
    <property type="molecule type" value="Genomic_DNA"/>
</dbReference>
<dbReference type="EMBL" id="AB023811">
    <property type="protein sequence ID" value="BAA82845.1"/>
    <property type="molecule type" value="mRNA"/>
</dbReference>
<dbReference type="EMBL" id="AL050264">
    <property type="protein sequence ID" value="CAB43366.1"/>
    <property type="molecule type" value="mRNA"/>
</dbReference>
<dbReference type="EMBL" id="AK054720">
    <property type="protein sequence ID" value="BAG51416.1"/>
    <property type="molecule type" value="mRNA"/>
</dbReference>
<dbReference type="EMBL" id="AK055443">
    <property type="protein sequence ID" value="BAB70924.1"/>
    <property type="molecule type" value="mRNA"/>
</dbReference>
<dbReference type="EMBL" id="AK316450">
    <property type="protein sequence ID" value="BAH14821.1"/>
    <property type="molecule type" value="mRNA"/>
</dbReference>
<dbReference type="EMBL" id="AC116036">
    <property type="status" value="NOT_ANNOTATED_CDS"/>
    <property type="molecule type" value="Genomic_DNA"/>
</dbReference>
<dbReference type="EMBL" id="AC119424">
    <property type="status" value="NOT_ANNOTATED_CDS"/>
    <property type="molecule type" value="Genomic_DNA"/>
</dbReference>
<dbReference type="EMBL" id="CH471055">
    <property type="protein sequence ID" value="EAW65380.1"/>
    <property type="molecule type" value="Genomic_DNA"/>
</dbReference>
<dbReference type="EMBL" id="BC010561">
    <property type="protein sequence ID" value="AAH10561.1"/>
    <property type="molecule type" value="mRNA"/>
</dbReference>
<dbReference type="CCDS" id="CCDS2892.1">
    <molecule id="O95990-1"/>
</dbReference>
<dbReference type="CCDS" id="CCDS63672.1">
    <molecule id="O95990-3"/>
</dbReference>
<dbReference type="CCDS" id="CCDS63673.1">
    <molecule id="O95990-4"/>
</dbReference>
<dbReference type="PIR" id="T08666">
    <property type="entry name" value="T08666"/>
</dbReference>
<dbReference type="RefSeq" id="NP_001070246.1">
    <molecule id="O95990-1"/>
    <property type="nucleotide sequence ID" value="NM_001076778.3"/>
</dbReference>
<dbReference type="RefSeq" id="NP_001269642.1">
    <molecule id="O95990-3"/>
    <property type="nucleotide sequence ID" value="NM_001282713.2"/>
</dbReference>
<dbReference type="RefSeq" id="NP_001269643.1">
    <molecule id="O95990-4"/>
    <property type="nucleotide sequence ID" value="NM_001282714.2"/>
</dbReference>
<dbReference type="RefSeq" id="NP_009108.1">
    <molecule id="O95990-1"/>
    <property type="nucleotide sequence ID" value="NM_007177.4"/>
</dbReference>
<dbReference type="RefSeq" id="XP_047303326.1">
    <molecule id="O95990-1"/>
    <property type="nucleotide sequence ID" value="XM_047447370.1"/>
</dbReference>
<dbReference type="RefSeq" id="XP_054201062.1">
    <molecule id="O95990-1"/>
    <property type="nucleotide sequence ID" value="XM_054345087.1"/>
</dbReference>
<dbReference type="SMR" id="O95990"/>
<dbReference type="BioGRID" id="116341">
    <property type="interactions" value="70"/>
</dbReference>
<dbReference type="FunCoup" id="O95990">
    <property type="interactions" value="299"/>
</dbReference>
<dbReference type="IntAct" id="O95990">
    <property type="interactions" value="40"/>
</dbReference>
<dbReference type="STRING" id="9606.ENSP00000419124"/>
<dbReference type="iPTMnet" id="O95990"/>
<dbReference type="PhosphoSitePlus" id="O95990"/>
<dbReference type="BioMuta" id="FAM107A"/>
<dbReference type="MassIVE" id="O95990"/>
<dbReference type="PaxDb" id="9606-ENSP00000419124"/>
<dbReference type="PeptideAtlas" id="O95990"/>
<dbReference type="ProteomicsDB" id="51166">
    <molecule id="O95990-1"/>
</dbReference>
<dbReference type="ProteomicsDB" id="51167">
    <molecule id="O95990-2"/>
</dbReference>
<dbReference type="Antibodypedia" id="31675">
    <property type="antibodies" value="133 antibodies from 22 providers"/>
</dbReference>
<dbReference type="DNASU" id="11170"/>
<dbReference type="Ensembl" id="ENST00000360997.7">
    <molecule id="O95990-1"/>
    <property type="protein sequence ID" value="ENSP00000354270.2"/>
    <property type="gene ID" value="ENSG00000168309.18"/>
</dbReference>
<dbReference type="Ensembl" id="ENST00000394481.5">
    <molecule id="O95990-1"/>
    <property type="protein sequence ID" value="ENSP00000377991.1"/>
    <property type="gene ID" value="ENSG00000168309.18"/>
</dbReference>
<dbReference type="Ensembl" id="ENST00000447756.2">
    <molecule id="O95990-3"/>
    <property type="protein sequence ID" value="ENSP00000400858.2"/>
    <property type="gene ID" value="ENSG00000168309.18"/>
</dbReference>
<dbReference type="Ensembl" id="ENST00000464064.5">
    <molecule id="O95990-2"/>
    <property type="protein sequence ID" value="ENSP00000419529.1"/>
    <property type="gene ID" value="ENSG00000168309.18"/>
</dbReference>
<dbReference type="Ensembl" id="ENST00000474531.5">
    <molecule id="O95990-4"/>
    <property type="protein sequence ID" value="ENSP00000419124.1"/>
    <property type="gene ID" value="ENSG00000168309.18"/>
</dbReference>
<dbReference type="Ensembl" id="ENST00000649301.1">
    <molecule id="O95990-1"/>
    <property type="protein sequence ID" value="ENSP00000497152.1"/>
    <property type="gene ID" value="ENSG00000168309.18"/>
</dbReference>
<dbReference type="GeneID" id="11170"/>
<dbReference type="KEGG" id="hsa:11170"/>
<dbReference type="MANE-Select" id="ENST00000360997.7">
    <property type="protein sequence ID" value="ENSP00000354270.2"/>
    <property type="RefSeq nucleotide sequence ID" value="NM_001076778.3"/>
    <property type="RefSeq protein sequence ID" value="NP_001070246.1"/>
</dbReference>
<dbReference type="UCSC" id="uc003dko.5">
    <molecule id="O95990-1"/>
    <property type="organism name" value="human"/>
</dbReference>
<dbReference type="AGR" id="HGNC:30827"/>
<dbReference type="CTD" id="11170"/>
<dbReference type="DisGeNET" id="11170"/>
<dbReference type="GeneCards" id="FAM107A"/>
<dbReference type="HGNC" id="HGNC:30827">
    <property type="gene designation" value="FAM107A"/>
</dbReference>
<dbReference type="HPA" id="ENSG00000168309">
    <property type="expression patterns" value="Group enriched (brain, choroid plexus)"/>
</dbReference>
<dbReference type="MIM" id="608295">
    <property type="type" value="gene"/>
</dbReference>
<dbReference type="neXtProt" id="NX_O95990"/>
<dbReference type="OpenTargets" id="ENSG00000168309"/>
<dbReference type="PharmGKB" id="PA143485464"/>
<dbReference type="VEuPathDB" id="HostDB:ENSG00000168309"/>
<dbReference type="eggNOG" id="ENOG502RZJK">
    <property type="taxonomic scope" value="Eukaryota"/>
</dbReference>
<dbReference type="GeneTree" id="ENSGT00390000011228"/>
<dbReference type="InParanoid" id="O95990"/>
<dbReference type="OrthoDB" id="5963205at2759"/>
<dbReference type="PAN-GO" id="O95990">
    <property type="GO annotations" value="6 GO annotations based on evolutionary models"/>
</dbReference>
<dbReference type="PhylomeDB" id="O95990"/>
<dbReference type="TreeFam" id="TF325943"/>
<dbReference type="PathwayCommons" id="O95990"/>
<dbReference type="SignaLink" id="O95990"/>
<dbReference type="SIGNOR" id="O95990"/>
<dbReference type="BioGRID-ORCS" id="11170">
    <property type="hits" value="21 hits in 1147 CRISPR screens"/>
</dbReference>
<dbReference type="CD-CODE" id="FB4E32DD">
    <property type="entry name" value="Presynaptic clusters and postsynaptic densities"/>
</dbReference>
<dbReference type="ChiTaRS" id="FAM107A">
    <property type="organism name" value="human"/>
</dbReference>
<dbReference type="GeneWiki" id="FAM107A"/>
<dbReference type="GenomeRNAi" id="11170"/>
<dbReference type="Pharos" id="O95990">
    <property type="development level" value="Tbio"/>
</dbReference>
<dbReference type="PRO" id="PR:O95990"/>
<dbReference type="Proteomes" id="UP000005640">
    <property type="component" value="Chromosome 3"/>
</dbReference>
<dbReference type="RNAct" id="O95990">
    <property type="molecule type" value="protein"/>
</dbReference>
<dbReference type="Bgee" id="ENSG00000168309">
    <property type="expression patterns" value="Expressed in CA1 field of hippocampus and 195 other cell types or tissues"/>
</dbReference>
<dbReference type="ExpressionAtlas" id="O95990">
    <property type="expression patterns" value="baseline and differential"/>
</dbReference>
<dbReference type="GO" id="GO:0015629">
    <property type="term" value="C:actin cytoskeleton"/>
    <property type="evidence" value="ECO:0000314"/>
    <property type="project" value="UniProtKB"/>
</dbReference>
<dbReference type="GO" id="GO:0005737">
    <property type="term" value="C:cytoplasm"/>
    <property type="evidence" value="ECO:0000314"/>
    <property type="project" value="UniProtKB"/>
</dbReference>
<dbReference type="GO" id="GO:0005925">
    <property type="term" value="C:focal adhesion"/>
    <property type="evidence" value="ECO:0000314"/>
    <property type="project" value="UniProtKB"/>
</dbReference>
<dbReference type="GO" id="GO:0043005">
    <property type="term" value="C:neuron projection"/>
    <property type="evidence" value="ECO:0000250"/>
    <property type="project" value="UniProtKB"/>
</dbReference>
<dbReference type="GO" id="GO:0016607">
    <property type="term" value="C:nuclear speck"/>
    <property type="evidence" value="ECO:0000314"/>
    <property type="project" value="HPA"/>
</dbReference>
<dbReference type="GO" id="GO:0005634">
    <property type="term" value="C:nucleus"/>
    <property type="evidence" value="ECO:0000314"/>
    <property type="project" value="UniProtKB"/>
</dbReference>
<dbReference type="GO" id="GO:0032587">
    <property type="term" value="C:ruffle membrane"/>
    <property type="evidence" value="ECO:0000314"/>
    <property type="project" value="UniProtKB"/>
</dbReference>
<dbReference type="GO" id="GO:0001725">
    <property type="term" value="C:stress fiber"/>
    <property type="evidence" value="ECO:0000314"/>
    <property type="project" value="UniProtKB"/>
</dbReference>
<dbReference type="GO" id="GO:0045202">
    <property type="term" value="C:synapse"/>
    <property type="evidence" value="ECO:0000250"/>
    <property type="project" value="UniProtKB"/>
</dbReference>
<dbReference type="GO" id="GO:0003779">
    <property type="term" value="F:actin binding"/>
    <property type="evidence" value="ECO:0007669"/>
    <property type="project" value="UniProtKB-KW"/>
</dbReference>
<dbReference type="GO" id="GO:0051017">
    <property type="term" value="P:actin filament bundle assembly"/>
    <property type="evidence" value="ECO:0000250"/>
    <property type="project" value="UniProtKB"/>
</dbReference>
<dbReference type="GO" id="GO:0030041">
    <property type="term" value="P:actin filament polymerization"/>
    <property type="evidence" value="ECO:0000250"/>
    <property type="project" value="UniProtKB"/>
</dbReference>
<dbReference type="GO" id="GO:0071385">
    <property type="term" value="P:cellular response to glucocorticoid stimulus"/>
    <property type="evidence" value="ECO:0000250"/>
    <property type="project" value="UniProtKB"/>
</dbReference>
<dbReference type="GO" id="GO:0031669">
    <property type="term" value="P:cellular response to nutrient levels"/>
    <property type="evidence" value="ECO:0000250"/>
    <property type="project" value="UniProtKB"/>
</dbReference>
<dbReference type="GO" id="GO:0050890">
    <property type="term" value="P:cognition"/>
    <property type="evidence" value="ECO:0000250"/>
    <property type="project" value="UniProtKB"/>
</dbReference>
<dbReference type="GO" id="GO:0051895">
    <property type="term" value="P:negative regulation of focal adhesion assembly"/>
    <property type="evidence" value="ECO:0000315"/>
    <property type="project" value="UniProtKB"/>
</dbReference>
<dbReference type="GO" id="GO:2000134">
    <property type="term" value="P:negative regulation of G1/S transition of mitotic cell cycle"/>
    <property type="evidence" value="ECO:0000315"/>
    <property type="project" value="UniProtKB"/>
</dbReference>
<dbReference type="GO" id="GO:1900272">
    <property type="term" value="P:negative regulation of long-term synaptic potentiation"/>
    <property type="evidence" value="ECO:0000250"/>
    <property type="project" value="UniProtKB"/>
</dbReference>
<dbReference type="GO" id="GO:0030335">
    <property type="term" value="P:positive regulation of cell migration"/>
    <property type="evidence" value="ECO:0000315"/>
    <property type="project" value="UniProtKB"/>
</dbReference>
<dbReference type="GO" id="GO:0031398">
    <property type="term" value="P:positive regulation of protein ubiquitination"/>
    <property type="evidence" value="ECO:0000315"/>
    <property type="project" value="UniProtKB"/>
</dbReference>
<dbReference type="GO" id="GO:0032956">
    <property type="term" value="P:regulation of actin cytoskeleton organization"/>
    <property type="evidence" value="ECO:0000315"/>
    <property type="project" value="UniProtKB"/>
</dbReference>
<dbReference type="GO" id="GO:0001558">
    <property type="term" value="P:regulation of cell growth"/>
    <property type="evidence" value="ECO:0000314"/>
    <property type="project" value="UniProtKB"/>
</dbReference>
<dbReference type="GO" id="GO:0070507">
    <property type="term" value="P:regulation of microtubule cytoskeleton organization"/>
    <property type="evidence" value="ECO:0000315"/>
    <property type="project" value="UniProtKB"/>
</dbReference>
<dbReference type="GO" id="GO:0031647">
    <property type="term" value="P:regulation of protein stability"/>
    <property type="evidence" value="ECO:0000315"/>
    <property type="project" value="UniProtKB"/>
</dbReference>
<dbReference type="InterPro" id="IPR009533">
    <property type="entry name" value="FAM107"/>
</dbReference>
<dbReference type="PANTHER" id="PTHR16768:SF3">
    <property type="entry name" value="ACTIN-ASSOCIATED PROTEIN FAM107A"/>
    <property type="match status" value="1"/>
</dbReference>
<dbReference type="PANTHER" id="PTHR16768">
    <property type="entry name" value="DOWN REGULATED IN RENAL CARCINOMA 1/TU3A"/>
    <property type="match status" value="1"/>
</dbReference>
<dbReference type="Pfam" id="PF06625">
    <property type="entry name" value="DUF1151"/>
    <property type="match status" value="1"/>
</dbReference>
<comment type="function">
    <text evidence="1 4 6 8">Stress-inducible actin-binding protein that plays a role in synaptic and cognitive functions by modulating actin filamentous (F-actin) dynamics. Mediates polymerization of globular actin to F-actin. Also binds to, stabilizes and bundles F-actin. Involved in synaptic function by regulating neurite outgrowth in an actin-dependent manner and for the acquisition of hippocampus-dependent cognitive function, such as learning and long-term memory (By similarity). Plays a role in the actin and microtubule cytoskeleton organization; negatively regulates focal adhesion (FA) assembly promoting malignant glial cell migration in an actin-, microtubule- and MAP1A-dependent manner (PubMed:20543869). Also involved in neuroblastoma G1/S phase cell cycle progression and cell proliferation inhibition by stimulating ubiquitination of NF-kappa-B subunit RELA and NF-kappa-B degradation in a COMMD1- and actin-dependent manner (PubMed:10564580, PubMed:28604741). May play a role in tumor development (PubMed:10564580).</text>
</comment>
<comment type="subunit">
    <text evidence="1 6 7 8">Interacts with ACTB (PubMed:21969592, PubMed:28604741). Interacts with COMMD1; this interaction stabilizes COMMD1 in the nucleus (PubMed:28604741). Interacts with MAP1A (PubMed:20543869). Interacts with PRDX1 (PubMed:21969592). Interacts with F-actin (By similarity).</text>
</comment>
<comment type="interaction">
    <interactant intactId="EBI-10192902">
        <id>O95990-3</id>
    </interactant>
    <interactant intactId="EBI-10171416">
        <id>Q96JN2-2</id>
        <label>CCDC136</label>
    </interactant>
    <organismsDiffer>false</organismsDiffer>
    <experiments>3</experiments>
</comment>
<comment type="interaction">
    <interactant intactId="EBI-10192902">
        <id>O95990-3</id>
    </interactant>
    <interactant intactId="EBI-5661036">
        <id>A1L4K1</id>
        <label>FSD2</label>
    </interactant>
    <organismsDiffer>false</organismsDiffer>
    <experiments>3</experiments>
</comment>
<comment type="interaction">
    <interactant intactId="EBI-10192902">
        <id>O95990-3</id>
    </interactant>
    <interactant intactId="EBI-10171697">
        <id>Q6A162</id>
        <label>KRT40</label>
    </interactant>
    <organismsDiffer>false</organismsDiffer>
    <experiments>3</experiments>
</comment>
<comment type="interaction">
    <interactant intactId="EBI-10192902">
        <id>O95990-3</id>
    </interactant>
    <interactant intactId="EBI-741037">
        <id>Q9BRK4</id>
        <label>LZTS2</label>
    </interactant>
    <organismsDiffer>false</organismsDiffer>
    <experiments>3</experiments>
</comment>
<comment type="interaction">
    <interactant intactId="EBI-10192902">
        <id>O95990-3</id>
    </interactant>
    <interactant intactId="EBI-10172526">
        <id>Q9UJV3-2</id>
        <label>MID2</label>
    </interactant>
    <organismsDiffer>false</organismsDiffer>
    <experiments>3</experiments>
</comment>
<comment type="interaction">
    <interactant intactId="EBI-10192902">
        <id>O95990-3</id>
    </interactant>
    <interactant intactId="EBI-302345">
        <id>Q8ND90</id>
        <label>PNMA1</label>
    </interactant>
    <organismsDiffer>false</organismsDiffer>
    <experiments>3</experiments>
</comment>
<comment type="interaction">
    <interactant intactId="EBI-10192902">
        <id>O95990-3</id>
    </interactant>
    <interactant intactId="EBI-726876">
        <id>Q6NUQ1</id>
        <label>RINT1</label>
    </interactant>
    <organismsDiffer>false</organismsDiffer>
    <experiments>3</experiments>
</comment>
<comment type="interaction">
    <interactant intactId="EBI-10192902">
        <id>O95990-3</id>
    </interactant>
    <interactant intactId="EBI-741602">
        <id>O94972</id>
        <label>TRIM37</label>
    </interactant>
    <organismsDiffer>false</organismsDiffer>
    <experiments>3</experiments>
</comment>
<comment type="interaction">
    <interactant intactId="EBI-10192902">
        <id>O95990-3</id>
    </interactant>
    <interactant intactId="EBI-739895">
        <id>Q8N6Y0</id>
        <label>USHBP1</label>
    </interactant>
    <organismsDiffer>false</organismsDiffer>
    <experiments>3</experiments>
</comment>
<comment type="interaction">
    <interactant intactId="EBI-11977223">
        <id>O95990-4</id>
    </interactant>
    <interactant intactId="EBI-11977221">
        <id>Q86Z20</id>
        <label>CCDC125</label>
    </interactant>
    <organismsDiffer>false</organismsDiffer>
    <experiments>3</experiments>
</comment>
<comment type="interaction">
    <interactant intactId="EBI-11977223">
        <id>O95990-4</id>
    </interactant>
    <interactant intactId="EBI-10961624">
        <id>Q2TAC2-2</id>
        <label>CCDC57</label>
    </interactant>
    <organismsDiffer>false</organismsDiffer>
    <experiments>3</experiments>
</comment>
<comment type="interaction">
    <interactant intactId="EBI-11977223">
        <id>O95990-4</id>
    </interactant>
    <interactant intactId="EBI-12001340">
        <id>P62508-3</id>
        <label>ESRRG</label>
    </interactant>
    <organismsDiffer>false</organismsDiffer>
    <experiments>3</experiments>
</comment>
<comment type="interaction">
    <interactant intactId="EBI-11977223">
        <id>O95990-4</id>
    </interactant>
    <interactant intactId="EBI-5916454">
        <id>A6NEM1</id>
        <label>GOLGA6L9</label>
    </interactant>
    <organismsDiffer>false</organismsDiffer>
    <experiments>3</experiments>
</comment>
<comment type="interaction">
    <interactant intactId="EBI-11977223">
        <id>O95990-4</id>
    </interactant>
    <interactant intactId="EBI-7116203">
        <id>O75031</id>
        <label>HSF2BP</label>
    </interactant>
    <organismsDiffer>false</organismsDiffer>
    <experiments>3</experiments>
</comment>
<comment type="interaction">
    <interactant intactId="EBI-11977223">
        <id>O95990-4</id>
    </interactant>
    <interactant intactId="EBI-3044087">
        <id>Q7Z3Y8</id>
        <label>KRT27</label>
    </interactant>
    <organismsDiffer>false</organismsDiffer>
    <experiments>3</experiments>
</comment>
<comment type="interaction">
    <interactant intactId="EBI-11977223">
        <id>O95990-4</id>
    </interactant>
    <interactant intactId="EBI-11522433">
        <id>Q5JR59-3</id>
        <label>MTUS2</label>
    </interactant>
    <organismsDiffer>false</organismsDiffer>
    <experiments>3</experiments>
</comment>
<comment type="interaction">
    <interactant intactId="EBI-11977223">
        <id>O95990-4</id>
    </interactant>
    <interactant intactId="EBI-10271199">
        <id>Q8NI38</id>
        <label>NFKBID</label>
    </interactant>
    <organismsDiffer>false</organismsDiffer>
    <experiments>3</experiments>
</comment>
<comment type="interaction">
    <interactant intactId="EBI-11977223">
        <id>O95990-4</id>
    </interactant>
    <interactant intactId="EBI-355744">
        <id>Q12933</id>
        <label>TRAF2</label>
    </interactant>
    <organismsDiffer>false</organismsDiffer>
    <experiments>3</experiments>
</comment>
<comment type="subcellular location">
    <subcellularLocation>
        <location evidence="4 5 6 8">Nucleus</location>
    </subcellularLocation>
    <subcellularLocation>
        <location evidence="6 8">Cytoplasm</location>
        <location evidence="6 8">Cytoskeleton</location>
        <location evidence="6 8">Stress fiber</location>
    </subcellularLocation>
    <subcellularLocation>
        <location evidence="6">Cell junction</location>
        <location evidence="6">Focal adhesion</location>
    </subcellularLocation>
    <subcellularLocation>
        <location evidence="6">Cell projection</location>
        <location evidence="6">Ruffle membrane</location>
    </subcellularLocation>
    <subcellularLocation>
        <location evidence="1">Synapse</location>
    </subcellularLocation>
    <text evidence="6 8">Colocalizes with F-actin and COMMD1 in the nucleus (PubMed:28604741). Colocalizes with MAP1A along actin stress fibers and membrane ruffles (PubMed:20543869).</text>
</comment>
<comment type="alternative products">
    <event type="alternative splicing"/>
    <isoform>
        <id>O95990-1</id>
        <name>1</name>
        <sequence type="displayed"/>
    </isoform>
    <isoform>
        <id>O95990-2</id>
        <name>2</name>
        <sequence type="described" ref="VSP_009232"/>
    </isoform>
    <isoform>
        <id>O95990-3</id>
        <name>3</name>
        <sequence type="described" ref="VSP_054803"/>
    </isoform>
    <isoform>
        <id>O95990-4</id>
        <name>4</name>
        <sequence type="described" ref="VSP_054804"/>
    </isoform>
</comment>
<comment type="tissue specificity">
    <text evidence="4 6">Widely expressed (PubMed:10564580). Expressed in neurons (PubMed:20543869). Expressed in malignant glial tumors (PubMed:20543869). Expression is reduced or absent in a number of cancer cell lines (PubMed:10564580).</text>
</comment>
<comment type="miscellaneous">
    <molecule>Isoform 2</molecule>
    <text evidence="12">May be due to an intron retention.</text>
</comment>
<comment type="similarity">
    <text evidence="12">Belongs to the FAM107 family.</text>
</comment>
<comment type="online information" name="Atlas of Genetics and Cytogenetics in Oncology and Haematology">
    <link uri="https://atlasgeneticsoncology.org/gene/42728/FAM107A"/>
</comment>
<proteinExistence type="evidence at protein level"/>
<reference key="1">
    <citation type="journal article" date="2000" name="Genes Chromosomes Cancer">
        <title>Loss of expression of the DRR1 gene at chromosomal segment 3p21.1 in renal cell carcinoma.</title>
        <authorList>
            <person name="Wang L."/>
            <person name="Darling J."/>
            <person name="Zhang J.-S."/>
            <person name="Liu W."/>
            <person name="Qian J."/>
            <person name="Bostwick D."/>
            <person name="Hartmann L."/>
            <person name="Jenkins R."/>
            <person name="Bardenhauer W."/>
            <person name="Schutte J."/>
            <person name="Opalka B."/>
            <person name="Smith D.I."/>
        </authorList>
    </citation>
    <scope>NUCLEOTIDE SEQUENCE [MRNA] (ISOFORM 1)</scope>
    <scope>FUNCTION</scope>
    <scope>SUBCELLULAR LOCATION</scope>
    <scope>TISSUE SPECIFICITY</scope>
    <scope>VARIANTS MET-15 AND LEU-19</scope>
    <source>
        <tissue>Ovary</tissue>
    </source>
</reference>
<reference key="2">
    <citation type="journal article" date="1999" name="Cytogenet. Cell Genet.">
        <title>Isolation and characterization of the novel gene, TU3A, in a commonly deleted region on 3p14.3-&gt;p14.2 in renal cell carcinoma.</title>
        <authorList>
            <person name="Yamato T."/>
            <person name="Orikasa K."/>
            <person name="Fukushige S."/>
            <person name="Orikasa S."/>
            <person name="Horii A."/>
        </authorList>
    </citation>
    <scope>NUCLEOTIDE SEQUENCE [GENOMIC DNA]</scope>
</reference>
<reference key="3">
    <citation type="journal article" date="2001" name="Genome Res.">
        <title>Towards a catalog of human genes and proteins: sequencing and analysis of 500 novel complete protein coding human cDNAs.</title>
        <authorList>
            <person name="Wiemann S."/>
            <person name="Weil B."/>
            <person name="Wellenreuther R."/>
            <person name="Gassenhuber J."/>
            <person name="Glassl S."/>
            <person name="Ansorge W."/>
            <person name="Boecher M."/>
            <person name="Bloecker H."/>
            <person name="Bauersachs S."/>
            <person name="Blum H."/>
            <person name="Lauber J."/>
            <person name="Duesterhoeft A."/>
            <person name="Beyer A."/>
            <person name="Koehrer K."/>
            <person name="Strack N."/>
            <person name="Mewes H.-W."/>
            <person name="Ottenwaelder B."/>
            <person name="Obermaier B."/>
            <person name="Tampe J."/>
            <person name="Heubner D."/>
            <person name="Wambutt R."/>
            <person name="Korn B."/>
            <person name="Klein M."/>
            <person name="Poustka A."/>
        </authorList>
    </citation>
    <scope>NUCLEOTIDE SEQUENCE [LARGE SCALE MRNA] (ISOFORM 1)</scope>
    <source>
        <tissue>Brain</tissue>
    </source>
</reference>
<reference key="4">
    <citation type="journal article" date="2004" name="Nat. Genet.">
        <title>Complete sequencing and characterization of 21,243 full-length human cDNAs.</title>
        <authorList>
            <person name="Ota T."/>
            <person name="Suzuki Y."/>
            <person name="Nishikawa T."/>
            <person name="Otsuki T."/>
            <person name="Sugiyama T."/>
            <person name="Irie R."/>
            <person name="Wakamatsu A."/>
            <person name="Hayashi K."/>
            <person name="Sato H."/>
            <person name="Nagai K."/>
            <person name="Kimura K."/>
            <person name="Makita H."/>
            <person name="Sekine M."/>
            <person name="Obayashi M."/>
            <person name="Nishi T."/>
            <person name="Shibahara T."/>
            <person name="Tanaka T."/>
            <person name="Ishii S."/>
            <person name="Yamamoto J."/>
            <person name="Saito K."/>
            <person name="Kawai Y."/>
            <person name="Isono Y."/>
            <person name="Nakamura Y."/>
            <person name="Nagahari K."/>
            <person name="Murakami K."/>
            <person name="Yasuda T."/>
            <person name="Iwayanagi T."/>
            <person name="Wagatsuma M."/>
            <person name="Shiratori A."/>
            <person name="Sudo H."/>
            <person name="Hosoiri T."/>
            <person name="Kaku Y."/>
            <person name="Kodaira H."/>
            <person name="Kondo H."/>
            <person name="Sugawara M."/>
            <person name="Takahashi M."/>
            <person name="Kanda K."/>
            <person name="Yokoi T."/>
            <person name="Furuya T."/>
            <person name="Kikkawa E."/>
            <person name="Omura Y."/>
            <person name="Abe K."/>
            <person name="Kamihara K."/>
            <person name="Katsuta N."/>
            <person name="Sato K."/>
            <person name="Tanikawa M."/>
            <person name="Yamazaki M."/>
            <person name="Ninomiya K."/>
            <person name="Ishibashi T."/>
            <person name="Yamashita H."/>
            <person name="Murakawa K."/>
            <person name="Fujimori K."/>
            <person name="Tanai H."/>
            <person name="Kimata M."/>
            <person name="Watanabe M."/>
            <person name="Hiraoka S."/>
            <person name="Chiba Y."/>
            <person name="Ishida S."/>
            <person name="Ono Y."/>
            <person name="Takiguchi S."/>
            <person name="Watanabe S."/>
            <person name="Yosida M."/>
            <person name="Hotuta T."/>
            <person name="Kusano J."/>
            <person name="Kanehori K."/>
            <person name="Takahashi-Fujii A."/>
            <person name="Hara H."/>
            <person name="Tanase T.-O."/>
            <person name="Nomura Y."/>
            <person name="Togiya S."/>
            <person name="Komai F."/>
            <person name="Hara R."/>
            <person name="Takeuchi K."/>
            <person name="Arita M."/>
            <person name="Imose N."/>
            <person name="Musashino K."/>
            <person name="Yuuki H."/>
            <person name="Oshima A."/>
            <person name="Sasaki N."/>
            <person name="Aotsuka S."/>
            <person name="Yoshikawa Y."/>
            <person name="Matsunawa H."/>
            <person name="Ichihara T."/>
            <person name="Shiohata N."/>
            <person name="Sano S."/>
            <person name="Moriya S."/>
            <person name="Momiyama H."/>
            <person name="Satoh N."/>
            <person name="Takami S."/>
            <person name="Terashima Y."/>
            <person name="Suzuki O."/>
            <person name="Nakagawa S."/>
            <person name="Senoh A."/>
            <person name="Mizoguchi H."/>
            <person name="Goto Y."/>
            <person name="Shimizu F."/>
            <person name="Wakebe H."/>
            <person name="Hishigaki H."/>
            <person name="Watanabe T."/>
            <person name="Sugiyama A."/>
            <person name="Takemoto M."/>
            <person name="Kawakami B."/>
            <person name="Yamazaki M."/>
            <person name="Watanabe K."/>
            <person name="Kumagai A."/>
            <person name="Itakura S."/>
            <person name="Fukuzumi Y."/>
            <person name="Fujimori Y."/>
            <person name="Komiyama M."/>
            <person name="Tashiro H."/>
            <person name="Tanigami A."/>
            <person name="Fujiwara T."/>
            <person name="Ono T."/>
            <person name="Yamada K."/>
            <person name="Fujii Y."/>
            <person name="Ozaki K."/>
            <person name="Hirao M."/>
            <person name="Ohmori Y."/>
            <person name="Kawabata A."/>
            <person name="Hikiji T."/>
            <person name="Kobatake N."/>
            <person name="Inagaki H."/>
            <person name="Ikema Y."/>
            <person name="Okamoto S."/>
            <person name="Okitani R."/>
            <person name="Kawakami T."/>
            <person name="Noguchi S."/>
            <person name="Itoh T."/>
            <person name="Shigeta K."/>
            <person name="Senba T."/>
            <person name="Matsumura K."/>
            <person name="Nakajima Y."/>
            <person name="Mizuno T."/>
            <person name="Morinaga M."/>
            <person name="Sasaki M."/>
            <person name="Togashi T."/>
            <person name="Oyama M."/>
            <person name="Hata H."/>
            <person name="Watanabe M."/>
            <person name="Komatsu T."/>
            <person name="Mizushima-Sugano J."/>
            <person name="Satoh T."/>
            <person name="Shirai Y."/>
            <person name="Takahashi Y."/>
            <person name="Nakagawa K."/>
            <person name="Okumura K."/>
            <person name="Nagase T."/>
            <person name="Nomura N."/>
            <person name="Kikuchi H."/>
            <person name="Masuho Y."/>
            <person name="Yamashita R."/>
            <person name="Nakai K."/>
            <person name="Yada T."/>
            <person name="Nakamura Y."/>
            <person name="Ohara O."/>
            <person name="Isogai T."/>
            <person name="Sugano S."/>
        </authorList>
    </citation>
    <scope>NUCLEOTIDE SEQUENCE [LARGE SCALE MRNA] (ISOFORMS 2; 3 AND 4)</scope>
    <source>
        <tissue>Fetal brain</tissue>
    </source>
</reference>
<reference key="5">
    <citation type="journal article" date="2006" name="Nature">
        <title>The DNA sequence, annotation and analysis of human chromosome 3.</title>
        <authorList>
            <person name="Muzny D.M."/>
            <person name="Scherer S.E."/>
            <person name="Kaul R."/>
            <person name="Wang J."/>
            <person name="Yu J."/>
            <person name="Sudbrak R."/>
            <person name="Buhay C.J."/>
            <person name="Chen R."/>
            <person name="Cree A."/>
            <person name="Ding Y."/>
            <person name="Dugan-Rocha S."/>
            <person name="Gill R."/>
            <person name="Gunaratne P."/>
            <person name="Harris R.A."/>
            <person name="Hawes A.C."/>
            <person name="Hernandez J."/>
            <person name="Hodgson A.V."/>
            <person name="Hume J."/>
            <person name="Jackson A."/>
            <person name="Khan Z.M."/>
            <person name="Kovar-Smith C."/>
            <person name="Lewis L.R."/>
            <person name="Lozado R.J."/>
            <person name="Metzker M.L."/>
            <person name="Milosavljevic A."/>
            <person name="Miner G.R."/>
            <person name="Morgan M.B."/>
            <person name="Nazareth L.V."/>
            <person name="Scott G."/>
            <person name="Sodergren E."/>
            <person name="Song X.-Z."/>
            <person name="Steffen D."/>
            <person name="Wei S."/>
            <person name="Wheeler D.A."/>
            <person name="Wright M.W."/>
            <person name="Worley K.C."/>
            <person name="Yuan Y."/>
            <person name="Zhang Z."/>
            <person name="Adams C.Q."/>
            <person name="Ansari-Lari M.A."/>
            <person name="Ayele M."/>
            <person name="Brown M.J."/>
            <person name="Chen G."/>
            <person name="Chen Z."/>
            <person name="Clendenning J."/>
            <person name="Clerc-Blankenburg K.P."/>
            <person name="Chen R."/>
            <person name="Chen Z."/>
            <person name="Davis C."/>
            <person name="Delgado O."/>
            <person name="Dinh H.H."/>
            <person name="Dong W."/>
            <person name="Draper H."/>
            <person name="Ernst S."/>
            <person name="Fu G."/>
            <person name="Gonzalez-Garay M.L."/>
            <person name="Garcia D.K."/>
            <person name="Gillett W."/>
            <person name="Gu J."/>
            <person name="Hao B."/>
            <person name="Haugen E."/>
            <person name="Havlak P."/>
            <person name="He X."/>
            <person name="Hennig S."/>
            <person name="Hu S."/>
            <person name="Huang W."/>
            <person name="Jackson L.R."/>
            <person name="Jacob L.S."/>
            <person name="Kelly S.H."/>
            <person name="Kube M."/>
            <person name="Levy R."/>
            <person name="Li Z."/>
            <person name="Liu B."/>
            <person name="Liu J."/>
            <person name="Liu W."/>
            <person name="Lu J."/>
            <person name="Maheshwari M."/>
            <person name="Nguyen B.-V."/>
            <person name="Okwuonu G.O."/>
            <person name="Palmeiri A."/>
            <person name="Pasternak S."/>
            <person name="Perez L.M."/>
            <person name="Phelps K.A."/>
            <person name="Plopper F.J."/>
            <person name="Qiang B."/>
            <person name="Raymond C."/>
            <person name="Rodriguez R."/>
            <person name="Saenphimmachak C."/>
            <person name="Santibanez J."/>
            <person name="Shen H."/>
            <person name="Shen Y."/>
            <person name="Subramanian S."/>
            <person name="Tabor P.E."/>
            <person name="Verduzco D."/>
            <person name="Waldron L."/>
            <person name="Wang J."/>
            <person name="Wang J."/>
            <person name="Wang Q."/>
            <person name="Williams G.A."/>
            <person name="Wong G.K.-S."/>
            <person name="Yao Z."/>
            <person name="Zhang J."/>
            <person name="Zhang X."/>
            <person name="Zhao G."/>
            <person name="Zhou J."/>
            <person name="Zhou Y."/>
            <person name="Nelson D."/>
            <person name="Lehrach H."/>
            <person name="Reinhardt R."/>
            <person name="Naylor S.L."/>
            <person name="Yang H."/>
            <person name="Olson M."/>
            <person name="Weinstock G."/>
            <person name="Gibbs R.A."/>
        </authorList>
    </citation>
    <scope>NUCLEOTIDE SEQUENCE [LARGE SCALE GENOMIC DNA]</scope>
</reference>
<reference key="6">
    <citation type="journal article" date="2004" name="Genome Res.">
        <title>The status, quality, and expansion of the NIH full-length cDNA project: the Mammalian Gene Collection (MGC).</title>
        <authorList>
            <consortium name="The MGC Project Team"/>
        </authorList>
    </citation>
    <scope>NUCLEOTIDE SEQUENCE [LARGE SCALE MRNA] (ISOFORM 1)</scope>
    <source>
        <tissue>Brain</tissue>
    </source>
</reference>
<reference key="7">
    <citation type="journal article" date="2000" name="EMBO Rep.">
        <title>Systematic subcellular localization of novel proteins identified by large-scale cDNA sequencing.</title>
        <authorList>
            <person name="Simpson J.C."/>
            <person name="Wellenreuther R."/>
            <person name="Poustka A."/>
            <person name="Pepperkok R."/>
            <person name="Wiemann S."/>
        </authorList>
    </citation>
    <scope>SUBCELLULAR LOCATION</scope>
</reference>
<reference key="8">
    <citation type="journal article" date="2010" name="Oncogene">
        <title>DRR drives brain cancer invasion by regulating cytoskeletal-focal adhesion dynamics.</title>
        <authorList>
            <person name="Le P.U."/>
            <person name="Angers-Loustau A."/>
            <person name="de Oliveira R.M."/>
            <person name="Ajlan A."/>
            <person name="Brassard C.L."/>
            <person name="Dudley A."/>
            <person name="Brent H."/>
            <person name="Siu V."/>
            <person name="Trinh G."/>
            <person name="Moelenkamp G."/>
            <person name="Wang J."/>
            <person name="Seyed Sadr M."/>
            <person name="Bedell B."/>
            <person name="Del Maestro R.F."/>
            <person name="Petrecca K."/>
        </authorList>
    </citation>
    <scope>FUNCTION</scope>
    <scope>SUBCELLULAR LOCATION</scope>
    <scope>TISSUE SPECIFICITY</scope>
    <scope>MUTAGENESIS OF 48-HIS--GLU-50; 65-PRO-GLU-66 AND 122-PRO-GLU-123</scope>
</reference>
<reference key="9">
    <citation type="journal article" date="2011" name="Proc. Natl. Acad. Sci. U.S.A.">
        <title>Tumor suppressor down-regulated in renal cell carcinoma 1 (DRR1) is a stress-induced actin bundling factor that modulates synaptic efficacy and cognition.</title>
        <authorList>
            <person name="Schmidt M.V."/>
            <person name="Schuelke J.P."/>
            <person name="Liebl C."/>
            <person name="Stiess M."/>
            <person name="Avrabos C."/>
            <person name="Bock J."/>
            <person name="Wochnik G.M."/>
            <person name="Davies H.A."/>
            <person name="Zimmermann N."/>
            <person name="Scharf S.H."/>
            <person name="Truembach D."/>
            <person name="Wurst W."/>
            <person name="Zieglgaensberger W."/>
            <person name="Turck C."/>
            <person name="Holsboer F."/>
            <person name="Stewart M.G."/>
            <person name="Bradke F."/>
            <person name="Eder M."/>
            <person name="Mueller M.B."/>
            <person name="Rein T."/>
        </authorList>
    </citation>
    <scope>INTERACTION WITH ACTB AND PRDX1</scope>
</reference>
<reference key="10">
    <citation type="journal article" date="2017" name="Oncogene">
        <title>A novel nuclear complex of DRR1, F-actin and COMMD1 involved in NF-kappaB degradation and cell growth suppression in neuroblastoma.</title>
        <authorList>
            <person name="Mu P."/>
            <person name="Akashi T."/>
            <person name="Lu F."/>
            <person name="Kishida S."/>
            <person name="Kadomatsu K."/>
        </authorList>
    </citation>
    <scope>FUNCTION</scope>
    <scope>INTERACTION WITH ACTB AND COMMD1</scope>
    <scope>SUBCELLULAR LOCATION</scope>
    <scope>MUTAGENESIS OF 65-PRO-GLU-66; 74-ARG--ARG-76; 81-LYS--LYS-84 AND 122-PRO-GLU-123</scope>
</reference>
<keyword id="KW-0009">Actin-binding</keyword>
<keyword id="KW-0025">Alternative splicing</keyword>
<keyword id="KW-0131">Cell cycle</keyword>
<keyword id="KW-0965">Cell junction</keyword>
<keyword id="KW-1003">Cell membrane</keyword>
<keyword id="KW-0966">Cell projection</keyword>
<keyword id="KW-0175">Coiled coil</keyword>
<keyword id="KW-0963">Cytoplasm</keyword>
<keyword id="KW-0206">Cytoskeleton</keyword>
<keyword id="KW-0341">Growth regulation</keyword>
<keyword id="KW-0472">Membrane</keyword>
<keyword id="KW-0539">Nucleus</keyword>
<keyword id="KW-1267">Proteomics identification</keyword>
<keyword id="KW-1185">Reference proteome</keyword>
<keyword id="KW-0346">Stress response</keyword>
<keyword id="KW-0770">Synapse</keyword>
<sequence>MYSEIQRERADIGGLMARPEYREWNPELIKPKKLLNPVKASRSHQELHRELLMNHRRGLGVDSKPELQRVLEHRRRNQLIKKKKEELEAKRLQCPFEQELLRRQQRLNQLEKPPEKEEDHAPEFIKVRENLRRIATLTSEEREL</sequence>
<gene>
    <name evidence="13" type="primary">FAM107A</name>
    <name evidence="9" type="synonym">DRR1</name>
    <name type="synonym">TU3A</name>
</gene>
<accession>O95990</accession>
<accession>B3KNQ4</accession>
<accession>B7ZAY5</accession>
<accession>J3KR61</accession>
<accession>Q96NH4</accession>
<protein>
    <recommendedName>
        <fullName evidence="12">Actin-associated protein FAM107A</fullName>
    </recommendedName>
    <alternativeName>
        <fullName evidence="9">Down-regulated in renal cell carcinoma 1</fullName>
    </alternativeName>
    <alternativeName>
        <fullName evidence="10">Protein TU3A</fullName>
    </alternativeName>
</protein>